<gene>
    <name evidence="2" type="primary">mutM</name>
    <name evidence="2" type="synonym">fpg</name>
    <name type="ordered locus">Rsph17025_2592</name>
</gene>
<reference key="1">
    <citation type="submission" date="2007-04" db="EMBL/GenBank/DDBJ databases">
        <title>Complete sequence of chromosome of Rhodobacter sphaeroides ATCC 17025.</title>
        <authorList>
            <consortium name="US DOE Joint Genome Institute"/>
            <person name="Copeland A."/>
            <person name="Lucas S."/>
            <person name="Lapidus A."/>
            <person name="Barry K."/>
            <person name="Detter J.C."/>
            <person name="Glavina del Rio T."/>
            <person name="Hammon N."/>
            <person name="Israni S."/>
            <person name="Dalin E."/>
            <person name="Tice H."/>
            <person name="Pitluck S."/>
            <person name="Chertkov O."/>
            <person name="Brettin T."/>
            <person name="Bruce D."/>
            <person name="Han C."/>
            <person name="Schmutz J."/>
            <person name="Larimer F."/>
            <person name="Land M."/>
            <person name="Hauser L."/>
            <person name="Kyrpides N."/>
            <person name="Kim E."/>
            <person name="Richardson P."/>
            <person name="Mackenzie C."/>
            <person name="Choudhary M."/>
            <person name="Donohue T.J."/>
            <person name="Kaplan S."/>
        </authorList>
    </citation>
    <scope>NUCLEOTIDE SEQUENCE [LARGE SCALE GENOMIC DNA]</scope>
    <source>
        <strain>ATCC 17025 / ATH 2.4.3</strain>
    </source>
</reference>
<evidence type="ECO:0000250" key="1"/>
<evidence type="ECO:0000255" key="2">
    <source>
        <dbReference type="HAMAP-Rule" id="MF_00103"/>
    </source>
</evidence>
<name>FPG_CERS5</name>
<dbReference type="EC" id="3.2.2.23" evidence="2"/>
<dbReference type="EC" id="4.2.99.18" evidence="2"/>
<dbReference type="EMBL" id="CP000661">
    <property type="protein sequence ID" value="ABP71480.1"/>
    <property type="molecule type" value="Genomic_DNA"/>
</dbReference>
<dbReference type="SMR" id="A4WVR6"/>
<dbReference type="STRING" id="349102.Rsph17025_2592"/>
<dbReference type="KEGG" id="rsq:Rsph17025_2592"/>
<dbReference type="eggNOG" id="COG0266">
    <property type="taxonomic scope" value="Bacteria"/>
</dbReference>
<dbReference type="HOGENOM" id="CLU_038423_1_1_5"/>
<dbReference type="BioCyc" id="RSPH349102:G1G8M-2672-MONOMER"/>
<dbReference type="GO" id="GO:0034039">
    <property type="term" value="F:8-oxo-7,8-dihydroguanine DNA N-glycosylase activity"/>
    <property type="evidence" value="ECO:0007669"/>
    <property type="project" value="TreeGrafter"/>
</dbReference>
<dbReference type="GO" id="GO:0140078">
    <property type="term" value="F:class I DNA-(apurinic or apyrimidinic site) endonuclease activity"/>
    <property type="evidence" value="ECO:0007669"/>
    <property type="project" value="UniProtKB-EC"/>
</dbReference>
<dbReference type="GO" id="GO:0003684">
    <property type="term" value="F:damaged DNA binding"/>
    <property type="evidence" value="ECO:0007669"/>
    <property type="project" value="InterPro"/>
</dbReference>
<dbReference type="GO" id="GO:0008270">
    <property type="term" value="F:zinc ion binding"/>
    <property type="evidence" value="ECO:0007669"/>
    <property type="project" value="UniProtKB-UniRule"/>
</dbReference>
<dbReference type="GO" id="GO:0006284">
    <property type="term" value="P:base-excision repair"/>
    <property type="evidence" value="ECO:0007669"/>
    <property type="project" value="InterPro"/>
</dbReference>
<dbReference type="CDD" id="cd08966">
    <property type="entry name" value="EcFpg-like_N"/>
    <property type="match status" value="1"/>
</dbReference>
<dbReference type="FunFam" id="1.10.8.50:FF:000003">
    <property type="entry name" value="Formamidopyrimidine-DNA glycosylase"/>
    <property type="match status" value="1"/>
</dbReference>
<dbReference type="Gene3D" id="1.10.8.50">
    <property type="match status" value="1"/>
</dbReference>
<dbReference type="Gene3D" id="3.20.190.10">
    <property type="entry name" value="MutM-like, N-terminal"/>
    <property type="match status" value="1"/>
</dbReference>
<dbReference type="HAMAP" id="MF_00103">
    <property type="entry name" value="Fapy_DNA_glycosyl"/>
    <property type="match status" value="1"/>
</dbReference>
<dbReference type="InterPro" id="IPR015886">
    <property type="entry name" value="DNA_glyclase/AP_lyase_DNA-bd"/>
</dbReference>
<dbReference type="InterPro" id="IPR020629">
    <property type="entry name" value="Formamido-pyr_DNA_Glyclase"/>
</dbReference>
<dbReference type="InterPro" id="IPR012319">
    <property type="entry name" value="FPG_cat"/>
</dbReference>
<dbReference type="InterPro" id="IPR035937">
    <property type="entry name" value="MutM-like_N-ter"/>
</dbReference>
<dbReference type="InterPro" id="IPR010979">
    <property type="entry name" value="Ribosomal_uS13-like_H2TH"/>
</dbReference>
<dbReference type="InterPro" id="IPR000214">
    <property type="entry name" value="Znf_DNA_glyclase/AP_lyase"/>
</dbReference>
<dbReference type="NCBIfam" id="TIGR00577">
    <property type="entry name" value="fpg"/>
    <property type="match status" value="1"/>
</dbReference>
<dbReference type="NCBIfam" id="NF002211">
    <property type="entry name" value="PRK01103.1"/>
    <property type="match status" value="1"/>
</dbReference>
<dbReference type="PANTHER" id="PTHR22993">
    <property type="entry name" value="FORMAMIDOPYRIMIDINE-DNA GLYCOSYLASE"/>
    <property type="match status" value="1"/>
</dbReference>
<dbReference type="PANTHER" id="PTHR22993:SF9">
    <property type="entry name" value="FORMAMIDOPYRIMIDINE-DNA GLYCOSYLASE"/>
    <property type="match status" value="1"/>
</dbReference>
<dbReference type="Pfam" id="PF01149">
    <property type="entry name" value="Fapy_DNA_glyco"/>
    <property type="match status" value="1"/>
</dbReference>
<dbReference type="Pfam" id="PF06831">
    <property type="entry name" value="H2TH"/>
    <property type="match status" value="1"/>
</dbReference>
<dbReference type="SMART" id="SM00898">
    <property type="entry name" value="Fapy_DNA_glyco"/>
    <property type="match status" value="1"/>
</dbReference>
<dbReference type="SMART" id="SM01232">
    <property type="entry name" value="H2TH"/>
    <property type="match status" value="1"/>
</dbReference>
<dbReference type="SUPFAM" id="SSF57716">
    <property type="entry name" value="Glucocorticoid receptor-like (DNA-binding domain)"/>
    <property type="match status" value="1"/>
</dbReference>
<dbReference type="SUPFAM" id="SSF81624">
    <property type="entry name" value="N-terminal domain of MutM-like DNA repair proteins"/>
    <property type="match status" value="1"/>
</dbReference>
<dbReference type="SUPFAM" id="SSF46946">
    <property type="entry name" value="S13-like H2TH domain"/>
    <property type="match status" value="1"/>
</dbReference>
<dbReference type="PROSITE" id="PS51068">
    <property type="entry name" value="FPG_CAT"/>
    <property type="match status" value="1"/>
</dbReference>
<dbReference type="PROSITE" id="PS51066">
    <property type="entry name" value="ZF_FPG_2"/>
    <property type="match status" value="1"/>
</dbReference>
<organism>
    <name type="scientific">Cereibacter sphaeroides (strain ATCC 17025 / ATH 2.4.3)</name>
    <name type="common">Rhodobacter sphaeroides</name>
    <dbReference type="NCBI Taxonomy" id="349102"/>
    <lineage>
        <taxon>Bacteria</taxon>
        <taxon>Pseudomonadati</taxon>
        <taxon>Pseudomonadota</taxon>
        <taxon>Alphaproteobacteria</taxon>
        <taxon>Rhodobacterales</taxon>
        <taxon>Paracoccaceae</taxon>
        <taxon>Cereibacter</taxon>
    </lineage>
</organism>
<proteinExistence type="inferred from homology"/>
<keyword id="KW-0227">DNA damage</keyword>
<keyword id="KW-0234">DNA repair</keyword>
<keyword id="KW-0238">DNA-binding</keyword>
<keyword id="KW-0326">Glycosidase</keyword>
<keyword id="KW-0378">Hydrolase</keyword>
<keyword id="KW-0456">Lyase</keyword>
<keyword id="KW-0479">Metal-binding</keyword>
<keyword id="KW-0511">Multifunctional enzyme</keyword>
<keyword id="KW-0862">Zinc</keyword>
<keyword id="KW-0863">Zinc-finger</keyword>
<accession>A4WVR6</accession>
<comment type="function">
    <text evidence="2">Involved in base excision repair of DNA damaged by oxidation or by mutagenic agents. Acts as a DNA glycosylase that recognizes and removes damaged bases. Has a preference for oxidized purines, such as 7,8-dihydro-8-oxoguanine (8-oxoG). Has AP (apurinic/apyrimidinic) lyase activity and introduces nicks in the DNA strand. Cleaves the DNA backbone by beta-delta elimination to generate a single-strand break at the site of the removed base with both 3'- and 5'-phosphates.</text>
</comment>
<comment type="catalytic activity">
    <reaction evidence="2">
        <text>Hydrolysis of DNA containing ring-opened 7-methylguanine residues, releasing 2,6-diamino-4-hydroxy-5-(N-methyl)formamidopyrimidine.</text>
        <dbReference type="EC" id="3.2.2.23"/>
    </reaction>
</comment>
<comment type="catalytic activity">
    <reaction evidence="2">
        <text>2'-deoxyribonucleotide-(2'-deoxyribose 5'-phosphate)-2'-deoxyribonucleotide-DNA = a 3'-end 2'-deoxyribonucleotide-(2,3-dehydro-2,3-deoxyribose 5'-phosphate)-DNA + a 5'-end 5'-phospho-2'-deoxyribonucleoside-DNA + H(+)</text>
        <dbReference type="Rhea" id="RHEA:66592"/>
        <dbReference type="Rhea" id="RHEA-COMP:13180"/>
        <dbReference type="Rhea" id="RHEA-COMP:16897"/>
        <dbReference type="Rhea" id="RHEA-COMP:17067"/>
        <dbReference type="ChEBI" id="CHEBI:15378"/>
        <dbReference type="ChEBI" id="CHEBI:136412"/>
        <dbReference type="ChEBI" id="CHEBI:157695"/>
        <dbReference type="ChEBI" id="CHEBI:167181"/>
        <dbReference type="EC" id="4.2.99.18"/>
    </reaction>
</comment>
<comment type="cofactor">
    <cofactor evidence="2">
        <name>Zn(2+)</name>
        <dbReference type="ChEBI" id="CHEBI:29105"/>
    </cofactor>
    <text evidence="2">Binds 1 zinc ion per subunit.</text>
</comment>
<comment type="subunit">
    <text evidence="2">Monomer.</text>
</comment>
<comment type="similarity">
    <text evidence="2">Belongs to the FPG family.</text>
</comment>
<protein>
    <recommendedName>
        <fullName evidence="2">Formamidopyrimidine-DNA glycosylase</fullName>
        <shortName evidence="2">Fapy-DNA glycosylase</shortName>
        <ecNumber evidence="2">3.2.2.23</ecNumber>
    </recommendedName>
    <alternativeName>
        <fullName evidence="2">DNA-(apurinic or apyrimidinic site) lyase MutM</fullName>
        <shortName evidence="2">AP lyase MutM</shortName>
        <ecNumber evidence="2">4.2.99.18</ecNumber>
    </alternativeName>
</protein>
<sequence length="283" mass="30795">MPELPEVETVRRGLEPAMAGRLISEARVNRPDLRWPLPPRMAERLTGQRVLRLRRRSKYILADLSGGESLLIHLGMSGRMLVSGARVGDFVHDHPAPARHDHVVLEMEGGARVTFNDARRFGAMDLVPTEAAETHPLLASLGPEPLGNAFDGAYLAARLTGRRTPVKAALLDQRIVAGLGNIYVCEVLFRAGLAPVRLAGSLGEARAAGLVPIIREVLSEAIEAGGSSLRDYRQADGELGYFQHTFRVYGREGQPCVTPGCRGLVGRIVQSGRSSFHCPECQR</sequence>
<feature type="initiator methionine" description="Removed" evidence="1">
    <location>
        <position position="1"/>
    </location>
</feature>
<feature type="chain" id="PRO_1000008759" description="Formamidopyrimidine-DNA glycosylase">
    <location>
        <begin position="2"/>
        <end position="283"/>
    </location>
</feature>
<feature type="zinc finger region" description="FPG-type" evidence="2">
    <location>
        <begin position="247"/>
        <end position="283"/>
    </location>
</feature>
<feature type="active site" description="Schiff-base intermediate with DNA" evidence="2">
    <location>
        <position position="2"/>
    </location>
</feature>
<feature type="active site" description="Proton donor" evidence="2">
    <location>
        <position position="3"/>
    </location>
</feature>
<feature type="active site" description="Proton donor; for beta-elimination activity" evidence="2">
    <location>
        <position position="58"/>
    </location>
</feature>
<feature type="active site" description="Proton donor; for delta-elimination activity" evidence="2">
    <location>
        <position position="273"/>
    </location>
</feature>
<feature type="binding site" evidence="2">
    <location>
        <position position="100"/>
    </location>
    <ligand>
        <name>DNA</name>
        <dbReference type="ChEBI" id="CHEBI:16991"/>
    </ligand>
</feature>
<feature type="binding site" evidence="2">
    <location>
        <position position="119"/>
    </location>
    <ligand>
        <name>DNA</name>
        <dbReference type="ChEBI" id="CHEBI:16991"/>
    </ligand>
</feature>
<feature type="binding site" evidence="2">
    <location>
        <position position="162"/>
    </location>
    <ligand>
        <name>DNA</name>
        <dbReference type="ChEBI" id="CHEBI:16991"/>
    </ligand>
</feature>